<reference key="1">
    <citation type="submission" date="2006-01" db="EMBL/GenBank/DDBJ databases">
        <title>Complete sequence of Anaeromyxobacter dehalogenans 2CP-C.</title>
        <authorList>
            <person name="Copeland A."/>
            <person name="Lucas S."/>
            <person name="Lapidus A."/>
            <person name="Barry K."/>
            <person name="Detter J.C."/>
            <person name="Glavina T."/>
            <person name="Hammon N."/>
            <person name="Israni S."/>
            <person name="Pitluck S."/>
            <person name="Brettin T."/>
            <person name="Bruce D."/>
            <person name="Han C."/>
            <person name="Tapia R."/>
            <person name="Gilna P."/>
            <person name="Kiss H."/>
            <person name="Schmutz J."/>
            <person name="Larimer F."/>
            <person name="Land M."/>
            <person name="Kyrpides N."/>
            <person name="Anderson I."/>
            <person name="Sanford R.A."/>
            <person name="Ritalahti K.M."/>
            <person name="Thomas H.S."/>
            <person name="Kirby J.R."/>
            <person name="Zhulin I.B."/>
            <person name="Loeffler F.E."/>
            <person name="Richardson P."/>
        </authorList>
    </citation>
    <scope>NUCLEOTIDE SEQUENCE [LARGE SCALE GENOMIC DNA]</scope>
    <source>
        <strain>2CP-C</strain>
    </source>
</reference>
<accession>Q2IJ78</accession>
<feature type="chain" id="PRO_0000241557" description="Large ribosomal subunit protein uL24">
    <location>
        <begin position="1"/>
        <end position="106"/>
    </location>
</feature>
<feature type="region of interest" description="Disordered" evidence="2">
    <location>
        <begin position="84"/>
        <end position="106"/>
    </location>
</feature>
<feature type="compositionally biased region" description="Basic and acidic residues" evidence="2">
    <location>
        <begin position="84"/>
        <end position="97"/>
    </location>
</feature>
<name>RL24_ANADE</name>
<gene>
    <name evidence="1" type="primary">rplX</name>
    <name type="ordered locus">Adeh_1935</name>
</gene>
<comment type="function">
    <text evidence="1">One of two assembly initiator proteins, it binds directly to the 5'-end of the 23S rRNA, where it nucleates assembly of the 50S subunit.</text>
</comment>
<comment type="function">
    <text evidence="1">One of the proteins that surrounds the polypeptide exit tunnel on the outside of the subunit.</text>
</comment>
<comment type="subunit">
    <text evidence="1">Part of the 50S ribosomal subunit.</text>
</comment>
<comment type="similarity">
    <text evidence="1">Belongs to the universal ribosomal protein uL24 family.</text>
</comment>
<organism>
    <name type="scientific">Anaeromyxobacter dehalogenans (strain 2CP-C)</name>
    <dbReference type="NCBI Taxonomy" id="290397"/>
    <lineage>
        <taxon>Bacteria</taxon>
        <taxon>Pseudomonadati</taxon>
        <taxon>Myxococcota</taxon>
        <taxon>Myxococcia</taxon>
        <taxon>Myxococcales</taxon>
        <taxon>Cystobacterineae</taxon>
        <taxon>Anaeromyxobacteraceae</taxon>
        <taxon>Anaeromyxobacter</taxon>
    </lineage>
</organism>
<dbReference type="EMBL" id="CP000251">
    <property type="protein sequence ID" value="ABC81706.1"/>
    <property type="molecule type" value="Genomic_DNA"/>
</dbReference>
<dbReference type="RefSeq" id="WP_011420989.1">
    <property type="nucleotide sequence ID" value="NC_007760.1"/>
</dbReference>
<dbReference type="SMR" id="Q2IJ78"/>
<dbReference type="STRING" id="290397.Adeh_1935"/>
<dbReference type="KEGG" id="ade:Adeh_1935"/>
<dbReference type="eggNOG" id="COG0198">
    <property type="taxonomic scope" value="Bacteria"/>
</dbReference>
<dbReference type="HOGENOM" id="CLU_093315_2_3_7"/>
<dbReference type="OrthoDB" id="9807419at2"/>
<dbReference type="Proteomes" id="UP000001935">
    <property type="component" value="Chromosome"/>
</dbReference>
<dbReference type="GO" id="GO:1990904">
    <property type="term" value="C:ribonucleoprotein complex"/>
    <property type="evidence" value="ECO:0007669"/>
    <property type="project" value="UniProtKB-KW"/>
</dbReference>
<dbReference type="GO" id="GO:0005840">
    <property type="term" value="C:ribosome"/>
    <property type="evidence" value="ECO:0007669"/>
    <property type="project" value="UniProtKB-KW"/>
</dbReference>
<dbReference type="GO" id="GO:0019843">
    <property type="term" value="F:rRNA binding"/>
    <property type="evidence" value="ECO:0007669"/>
    <property type="project" value="UniProtKB-UniRule"/>
</dbReference>
<dbReference type="GO" id="GO:0003735">
    <property type="term" value="F:structural constituent of ribosome"/>
    <property type="evidence" value="ECO:0007669"/>
    <property type="project" value="InterPro"/>
</dbReference>
<dbReference type="GO" id="GO:0006412">
    <property type="term" value="P:translation"/>
    <property type="evidence" value="ECO:0007669"/>
    <property type="project" value="UniProtKB-UniRule"/>
</dbReference>
<dbReference type="CDD" id="cd06089">
    <property type="entry name" value="KOW_RPL26"/>
    <property type="match status" value="1"/>
</dbReference>
<dbReference type="Gene3D" id="2.30.30.30">
    <property type="match status" value="1"/>
</dbReference>
<dbReference type="HAMAP" id="MF_01326_B">
    <property type="entry name" value="Ribosomal_uL24_B"/>
    <property type="match status" value="1"/>
</dbReference>
<dbReference type="InterPro" id="IPR005824">
    <property type="entry name" value="KOW"/>
</dbReference>
<dbReference type="InterPro" id="IPR014722">
    <property type="entry name" value="Rib_uL2_dom2"/>
</dbReference>
<dbReference type="InterPro" id="IPR003256">
    <property type="entry name" value="Ribosomal_uL24"/>
</dbReference>
<dbReference type="InterPro" id="IPR005825">
    <property type="entry name" value="Ribosomal_uL24_CS"/>
</dbReference>
<dbReference type="InterPro" id="IPR041988">
    <property type="entry name" value="Ribosomal_uL24_KOW"/>
</dbReference>
<dbReference type="InterPro" id="IPR008991">
    <property type="entry name" value="Translation_prot_SH3-like_sf"/>
</dbReference>
<dbReference type="NCBIfam" id="TIGR01079">
    <property type="entry name" value="rplX_bact"/>
    <property type="match status" value="1"/>
</dbReference>
<dbReference type="PANTHER" id="PTHR12903">
    <property type="entry name" value="MITOCHONDRIAL RIBOSOMAL PROTEIN L24"/>
    <property type="match status" value="1"/>
</dbReference>
<dbReference type="Pfam" id="PF00467">
    <property type="entry name" value="KOW"/>
    <property type="match status" value="1"/>
</dbReference>
<dbReference type="Pfam" id="PF17136">
    <property type="entry name" value="ribosomal_L24"/>
    <property type="match status" value="1"/>
</dbReference>
<dbReference type="SMART" id="SM00739">
    <property type="entry name" value="KOW"/>
    <property type="match status" value="1"/>
</dbReference>
<dbReference type="SUPFAM" id="SSF50104">
    <property type="entry name" value="Translation proteins SH3-like domain"/>
    <property type="match status" value="1"/>
</dbReference>
<dbReference type="PROSITE" id="PS01108">
    <property type="entry name" value="RIBOSOMAL_L24"/>
    <property type="match status" value="1"/>
</dbReference>
<keyword id="KW-1185">Reference proteome</keyword>
<keyword id="KW-0687">Ribonucleoprotein</keyword>
<keyword id="KW-0689">Ribosomal protein</keyword>
<keyword id="KW-0694">RNA-binding</keyword>
<keyword id="KW-0699">rRNA-binding</keyword>
<sequence length="106" mass="11695">MAEIRKGDTVKVIAGKEKGKTGRVLEVLREDGRVRVEKLMTVKRHQKKGRSQANPEGGILELPGTIAISSVMVVGKDDKPVRREKIGRELGAKEKARLQKRKAAAK</sequence>
<protein>
    <recommendedName>
        <fullName evidence="1">Large ribosomal subunit protein uL24</fullName>
    </recommendedName>
    <alternativeName>
        <fullName evidence="3">50S ribosomal protein L24</fullName>
    </alternativeName>
</protein>
<proteinExistence type="inferred from homology"/>
<evidence type="ECO:0000255" key="1">
    <source>
        <dbReference type="HAMAP-Rule" id="MF_01326"/>
    </source>
</evidence>
<evidence type="ECO:0000256" key="2">
    <source>
        <dbReference type="SAM" id="MobiDB-lite"/>
    </source>
</evidence>
<evidence type="ECO:0000305" key="3"/>